<proteinExistence type="evidence at protein level"/>
<keyword id="KW-1064">Adaptive immunity</keyword>
<keyword id="KW-1003">Cell membrane</keyword>
<keyword id="KW-1015">Disulfide bond</keyword>
<keyword id="KW-0391">Immunity</keyword>
<keyword id="KW-1280">Immunoglobulin</keyword>
<keyword id="KW-0393">Immunoglobulin domain</keyword>
<keyword id="KW-0472">Membrane</keyword>
<keyword id="KW-1267">Proteomics identification</keyword>
<keyword id="KW-1185">Reference proteome</keyword>
<keyword id="KW-0964">Secreted</keyword>
<keyword id="KW-0732">Signal</keyword>
<accession>A0A0J9YXX1</accession>
<sequence length="117" mass="12773">MGSTAILALLLAVLQGVCAEVQLVQSGAEVKKPGESLRISCKGSGYSFTSYWISWVRQMPGKGLEWMGRIDPSDSYTNYSPSFQGHVTISADKSISTAYLQWSSLKASDTAMYYCAR</sequence>
<comment type="function">
    <text evidence="5 6 7 8">V region of the variable domain of immunoglobulin heavy chains that participates in the antigen recognition (PubMed:24600447). Immunoglobulins, also known as antibodies, are membrane-bound or secreted glycoproteins produced by B lymphocytes. In the recognition phase of humoral immunity, the membrane-bound immunoglobulins serve as receptors which, upon binding of a specific antigen, trigger the clonal expansion and differentiation of B lymphocytes into immunoglobulins-secreting plasma cells. Secreted immunoglobulins mediate the effector phase of humoral immunity, which results in the elimination of bound antigens (PubMed:20176268, PubMed:22158414). The antigen binding site is formed by the variable domain of one heavy chain, together with that of its associated light chain. Thus, each immunoglobulin has two antigen binding sites with remarkable affinity for a particular antigen. The variable domains are assembled by a process called V-(D)-J rearrangement and can then be subjected to somatic hypermutations which, after exposure to antigen and selection, allow affinity maturation for a particular antigen (PubMed:17576170, PubMed:20176268).</text>
</comment>
<comment type="subunit">
    <text evidence="6">Immunoglobulins are composed of two identical heavy chains and two identical light chains; disulfide-linked.</text>
</comment>
<comment type="subcellular location">
    <subcellularLocation>
        <location evidence="6 7">Secreted</location>
    </subcellularLocation>
    <subcellularLocation>
        <location evidence="6 7">Cell membrane</location>
    </subcellularLocation>
</comment>
<comment type="polymorphism">
    <text evidence="10">There are several alleles. The sequence shown is that of IMGT allele IGHV5-10-1*03.</text>
</comment>
<comment type="caution">
    <text evidence="10">For examples of full-length immunoglobulin heavy chains (of different isotypes) see AC P0DOX2, AC P0DOX3, AC P0DOX4, AC P0DOX5 and AC P0DOX6.</text>
</comment>
<evidence type="ECO:0000250" key="1">
    <source>
        <dbReference type="UniProtKB" id="P23083"/>
    </source>
</evidence>
<evidence type="ECO:0000255" key="2"/>
<evidence type="ECO:0000255" key="3">
    <source>
        <dbReference type="PROSITE-ProRule" id="PRU00114"/>
    </source>
</evidence>
<evidence type="ECO:0000303" key="4">
    <source>
    </source>
</evidence>
<evidence type="ECO:0000303" key="5">
    <source>
    </source>
</evidence>
<evidence type="ECO:0000303" key="6">
    <source>
    </source>
</evidence>
<evidence type="ECO:0000303" key="7">
    <source>
    </source>
</evidence>
<evidence type="ECO:0000303" key="8">
    <source>
    </source>
</evidence>
<evidence type="ECO:0000303" key="9">
    <source ref="3"/>
</evidence>
<evidence type="ECO:0000305" key="10"/>
<name>HV5X1_HUMAN</name>
<feature type="signal peptide" evidence="2">
    <location>
        <begin position="1"/>
        <end position="19"/>
    </location>
</feature>
<feature type="chain" id="PRO_5007412549" description="Immunoglobulin heavy variable 5-10-1" evidence="2">
    <location>
        <begin position="20"/>
        <end position="117"/>
    </location>
</feature>
<feature type="domain" description="Ig-like" evidence="3">
    <location>
        <begin position="20"/>
        <end position="117" status="greater than"/>
    </location>
</feature>
<feature type="region of interest" description="Framework-1" evidence="1">
    <location>
        <begin position="20"/>
        <end position="44"/>
    </location>
</feature>
<feature type="region of interest" description="Complementarity-determining-1" evidence="1">
    <location>
        <begin position="45"/>
        <end position="52"/>
    </location>
</feature>
<feature type="region of interest" description="Framework-2" evidence="1">
    <location>
        <begin position="53"/>
        <end position="69"/>
    </location>
</feature>
<feature type="region of interest" description="Complementarity-determining-2" evidence="1">
    <location>
        <begin position="70"/>
        <end position="77"/>
    </location>
</feature>
<feature type="region of interest" description="Framework-3" evidence="1">
    <location>
        <begin position="78"/>
        <end position="115"/>
    </location>
</feature>
<feature type="region of interest" description="Complementarity-determining-3" evidence="1">
    <location>
        <begin position="116"/>
        <end position="117" status="greater than"/>
    </location>
</feature>
<feature type="disulfide bond" evidence="3">
    <location>
        <begin position="41"/>
        <end position="115"/>
    </location>
</feature>
<feature type="non-terminal residue">
    <location>
        <position position="117"/>
    </location>
</feature>
<organism>
    <name type="scientific">Homo sapiens</name>
    <name type="common">Human</name>
    <dbReference type="NCBI Taxonomy" id="9606"/>
    <lineage>
        <taxon>Eukaryota</taxon>
        <taxon>Metazoa</taxon>
        <taxon>Chordata</taxon>
        <taxon>Craniata</taxon>
        <taxon>Vertebrata</taxon>
        <taxon>Euteleostomi</taxon>
        <taxon>Mammalia</taxon>
        <taxon>Eutheria</taxon>
        <taxon>Euarchontoglires</taxon>
        <taxon>Primates</taxon>
        <taxon>Haplorrhini</taxon>
        <taxon>Catarrhini</taxon>
        <taxon>Hominidae</taxon>
        <taxon>Homo</taxon>
    </lineage>
</organism>
<reference key="1">
    <citation type="journal article" date="2003" name="Nature">
        <title>The DNA sequence and analysis of human chromosome 14.</title>
        <authorList>
            <person name="Heilig R."/>
            <person name="Eckenberg R."/>
            <person name="Petit J.-L."/>
            <person name="Fonknechten N."/>
            <person name="Da Silva C."/>
            <person name="Cattolico L."/>
            <person name="Levy M."/>
            <person name="Barbe V."/>
            <person name="De Berardinis V."/>
            <person name="Ureta-Vidal A."/>
            <person name="Pelletier E."/>
            <person name="Vico V."/>
            <person name="Anthouard V."/>
            <person name="Rowen L."/>
            <person name="Madan A."/>
            <person name="Qin S."/>
            <person name="Sun H."/>
            <person name="Du H."/>
            <person name="Pepin K."/>
            <person name="Artiguenave F."/>
            <person name="Robert C."/>
            <person name="Cruaud C."/>
            <person name="Bruels T."/>
            <person name="Jaillon O."/>
            <person name="Friedlander L."/>
            <person name="Samson G."/>
            <person name="Brottier P."/>
            <person name="Cure S."/>
            <person name="Segurens B."/>
            <person name="Aniere F."/>
            <person name="Samain S."/>
            <person name="Crespeau H."/>
            <person name="Abbasi N."/>
            <person name="Aiach N."/>
            <person name="Boscus D."/>
            <person name="Dickhoff R."/>
            <person name="Dors M."/>
            <person name="Dubois I."/>
            <person name="Friedman C."/>
            <person name="Gouyvenoux M."/>
            <person name="James R."/>
            <person name="Madan A."/>
            <person name="Mairey-Estrada B."/>
            <person name="Mangenot S."/>
            <person name="Martins N."/>
            <person name="Menard M."/>
            <person name="Oztas S."/>
            <person name="Ratcliffe A."/>
            <person name="Shaffer T."/>
            <person name="Trask B."/>
            <person name="Vacherie B."/>
            <person name="Bellemere C."/>
            <person name="Belser C."/>
            <person name="Besnard-Gonnet M."/>
            <person name="Bartol-Mavel D."/>
            <person name="Boutard M."/>
            <person name="Briez-Silla S."/>
            <person name="Combette S."/>
            <person name="Dufosse-Laurent V."/>
            <person name="Ferron C."/>
            <person name="Lechaplais C."/>
            <person name="Louesse C."/>
            <person name="Muselet D."/>
            <person name="Magdelenat G."/>
            <person name="Pateau E."/>
            <person name="Petit E."/>
            <person name="Sirvain-Trukniewicz P."/>
            <person name="Trybou A."/>
            <person name="Vega-Czarny N."/>
            <person name="Bataille E."/>
            <person name="Bluet E."/>
            <person name="Bordelais I."/>
            <person name="Dubois M."/>
            <person name="Dumont C."/>
            <person name="Guerin T."/>
            <person name="Haffray S."/>
            <person name="Hammadi R."/>
            <person name="Muanga J."/>
            <person name="Pellouin V."/>
            <person name="Robert D."/>
            <person name="Wunderle E."/>
            <person name="Gauguet G."/>
            <person name="Roy A."/>
            <person name="Sainte-Marthe L."/>
            <person name="Verdier J."/>
            <person name="Verdier-Discala C."/>
            <person name="Hillier L.W."/>
            <person name="Fulton L."/>
            <person name="McPherson J."/>
            <person name="Matsuda F."/>
            <person name="Wilson R."/>
            <person name="Scarpelli C."/>
            <person name="Gyapay G."/>
            <person name="Wincker P."/>
            <person name="Saurin W."/>
            <person name="Quetier F."/>
            <person name="Waterston R."/>
            <person name="Hood L."/>
            <person name="Weissenbach J."/>
        </authorList>
    </citation>
    <scope>NUCLEOTIDE SEQUENCE [LARGE SCALE GENOMIC DNA] (IMGT ALLELE IGHV5-10-1*03)</scope>
</reference>
<reference key="2">
    <citation type="journal article" date="2001" name="Exp. Clin. Immunogenet.">
        <title>Nomenclature of the human immunoglobulin heavy (IGH) genes.</title>
        <authorList>
            <person name="Lefranc M.P."/>
        </authorList>
    </citation>
    <scope>NOMENCLATURE</scope>
</reference>
<reference key="3">
    <citation type="book" date="2001" name="The Immunoglobulin FactsBook.">
        <title>The Immunoglobulin FactsBook.</title>
        <editorList>
            <person name="Lefranc M.P."/>
            <person name="Lefranc G."/>
        </editorList>
        <authorList>
            <person name="Lefranc M.P."/>
            <person name="Lefranc G."/>
        </authorList>
    </citation>
    <scope>NOMENCLATURE</scope>
</reference>
<reference key="4">
    <citation type="journal article" date="2007" name="Annu. Rev. Genet.">
        <title>Immunoglobulin somatic hypermutation.</title>
        <authorList>
            <person name="Teng G."/>
            <person name="Papavasiliou F.N."/>
        </authorList>
    </citation>
    <scope>REVIEW ON SOMATIC HYPERMUTATION</scope>
</reference>
<reference key="5">
    <citation type="journal article" date="2010" name="J. Allergy Clin. Immunol.">
        <title>Structure and function of immunoglobulins.</title>
        <authorList>
            <person name="Schroeder H.W. Jr."/>
            <person name="Cavacini L."/>
        </authorList>
    </citation>
    <scope>REVIEW ON IMMUNOGLOBULINS</scope>
</reference>
<reference key="6">
    <citation type="journal article" date="2012" name="Nat. Rev. Immunol.">
        <title>Molecular programming of B cell memory.</title>
        <authorList>
            <person name="McHeyzer-Williams M."/>
            <person name="Okitsu S."/>
            <person name="Wang N."/>
            <person name="McHeyzer-Williams L."/>
        </authorList>
    </citation>
    <scope>REVIEW ON FUNCTION</scope>
</reference>
<reference key="7">
    <citation type="journal article" date="2014" name="Front. Immunol.">
        <title>Immunoglobulin and T Cell Receptor Genes: IMGT((R)) and the Birth and Rise of Immunoinformatics.</title>
        <authorList>
            <person name="Lefranc M.P."/>
        </authorList>
    </citation>
    <scope>NOMENCLATURE</scope>
</reference>
<gene>
    <name evidence="4 9" type="primary">IGHV5-10-1</name>
</gene>
<dbReference type="EMBL" id="AC247036">
    <property type="status" value="NOT_ANNOTATED_CDS"/>
    <property type="molecule type" value="Genomic_DNA"/>
</dbReference>
<dbReference type="SMR" id="A0A0J9YXX1"/>
<dbReference type="FunCoup" id="A0A0J9YXX1">
    <property type="interactions" value="270"/>
</dbReference>
<dbReference type="IMGT_GENE-DB" id="IGHV5-10-1"/>
<dbReference type="BioMuta" id="HGNC:5661"/>
<dbReference type="jPOST" id="A0A0J9YXX1"/>
<dbReference type="MassIVE" id="A0A0J9YXX1"/>
<dbReference type="Ensembl" id="ENST00000632950.2">
    <property type="protein sequence ID" value="ENSP00000488144.1"/>
    <property type="gene ID" value="ENSG00000282651.2"/>
</dbReference>
<dbReference type="AGR" id="HGNC:5661"/>
<dbReference type="GeneCards" id="IGHV5-10-1"/>
<dbReference type="HGNC" id="HGNC:5661">
    <property type="gene designation" value="IGHV5-10-1"/>
</dbReference>
<dbReference type="HPA" id="ENSG00000282651">
    <property type="expression patterns" value="Tissue enhanced (intestine, lymphoid tissue)"/>
</dbReference>
<dbReference type="neXtProt" id="NX_A0A0J9YXX1"/>
<dbReference type="VEuPathDB" id="HostDB:ENSG00000282651"/>
<dbReference type="GeneTree" id="ENSGT00950000183013"/>
<dbReference type="InParanoid" id="A0A0J9YXX1"/>
<dbReference type="OMA" id="FTGYWIS"/>
<dbReference type="PAN-GO" id="A0A0J9YXX1">
    <property type="GO annotations" value="11 GO annotations based on evolutionary models"/>
</dbReference>
<dbReference type="ChiTaRS" id="IGHV5-10-1">
    <property type="organism name" value="human"/>
</dbReference>
<dbReference type="Pharos" id="A0A0J9YXX1">
    <property type="development level" value="Tdark"/>
</dbReference>
<dbReference type="PRO" id="PR:A0A0J9YXX1"/>
<dbReference type="Proteomes" id="UP000005640">
    <property type="component" value="Chromosome 14"/>
</dbReference>
<dbReference type="RNAct" id="A0A0J9YXX1">
    <property type="molecule type" value="protein"/>
</dbReference>
<dbReference type="Bgee" id="ENSG00000282651">
    <property type="expression patterns" value="Expressed in rectum and 86 other cell types or tissues"/>
</dbReference>
<dbReference type="GO" id="GO:0005576">
    <property type="term" value="C:extracellular region"/>
    <property type="evidence" value="ECO:0007669"/>
    <property type="project" value="UniProtKB-SubCell"/>
</dbReference>
<dbReference type="GO" id="GO:0019814">
    <property type="term" value="C:immunoglobulin complex"/>
    <property type="evidence" value="ECO:0007669"/>
    <property type="project" value="UniProtKB-KW"/>
</dbReference>
<dbReference type="GO" id="GO:0005886">
    <property type="term" value="C:plasma membrane"/>
    <property type="evidence" value="ECO:0007669"/>
    <property type="project" value="UniProtKB-SubCell"/>
</dbReference>
<dbReference type="GO" id="GO:0003823">
    <property type="term" value="F:antigen binding"/>
    <property type="evidence" value="ECO:0000318"/>
    <property type="project" value="GO_Central"/>
</dbReference>
<dbReference type="GO" id="GO:0016064">
    <property type="term" value="P:immunoglobulin mediated immune response"/>
    <property type="evidence" value="ECO:0000318"/>
    <property type="project" value="GO_Central"/>
</dbReference>
<dbReference type="FunFam" id="2.60.40.10:FF:001072">
    <property type="entry name" value="Immunoglobulin heavy variable V1-24"/>
    <property type="match status" value="1"/>
</dbReference>
<dbReference type="Gene3D" id="2.60.40.10">
    <property type="entry name" value="Immunoglobulins"/>
    <property type="match status" value="1"/>
</dbReference>
<dbReference type="InterPro" id="IPR007110">
    <property type="entry name" value="Ig-like_dom"/>
</dbReference>
<dbReference type="InterPro" id="IPR036179">
    <property type="entry name" value="Ig-like_dom_sf"/>
</dbReference>
<dbReference type="InterPro" id="IPR013783">
    <property type="entry name" value="Ig-like_fold"/>
</dbReference>
<dbReference type="InterPro" id="IPR013106">
    <property type="entry name" value="Ig_V-set"/>
</dbReference>
<dbReference type="InterPro" id="IPR050199">
    <property type="entry name" value="IgHV"/>
</dbReference>
<dbReference type="PANTHER" id="PTHR23266">
    <property type="entry name" value="IMMUNOGLOBULIN HEAVY CHAIN"/>
    <property type="match status" value="1"/>
</dbReference>
<dbReference type="Pfam" id="PF07686">
    <property type="entry name" value="V-set"/>
    <property type="match status" value="1"/>
</dbReference>
<dbReference type="SMART" id="SM00406">
    <property type="entry name" value="IGv"/>
    <property type="match status" value="1"/>
</dbReference>
<dbReference type="SUPFAM" id="SSF48726">
    <property type="entry name" value="Immunoglobulin"/>
    <property type="match status" value="1"/>
</dbReference>
<dbReference type="PROSITE" id="PS50835">
    <property type="entry name" value="IG_LIKE"/>
    <property type="match status" value="1"/>
</dbReference>
<protein>
    <recommendedName>
        <fullName evidence="4 9">Immunoglobulin heavy variable 5-10-1</fullName>
    </recommendedName>
</protein>